<comment type="function">
    <text evidence="1">Fluoride-specific ion channel. Important for reducing fluoride concentration in the cell, thus reducing its toxicity.</text>
</comment>
<comment type="catalytic activity">
    <reaction evidence="1">
        <text>fluoride(in) = fluoride(out)</text>
        <dbReference type="Rhea" id="RHEA:76159"/>
        <dbReference type="ChEBI" id="CHEBI:17051"/>
    </reaction>
    <physiologicalReaction direction="left-to-right" evidence="1">
        <dbReference type="Rhea" id="RHEA:76160"/>
    </physiologicalReaction>
</comment>
<comment type="activity regulation">
    <text evidence="1">Na(+) is not transported, but it plays an essential structural role and its presence is essential for fluoride channel function.</text>
</comment>
<comment type="subcellular location">
    <subcellularLocation>
        <location evidence="1">Cell inner membrane</location>
        <topology evidence="1">Multi-pass membrane protein</topology>
    </subcellularLocation>
</comment>
<comment type="similarity">
    <text evidence="1">Belongs to the fluoride channel Fluc/FEX (TC 1.A.43) family.</text>
</comment>
<protein>
    <recommendedName>
        <fullName evidence="1">Fluoride-specific ion channel FluC</fullName>
    </recommendedName>
</protein>
<feature type="chain" id="PRO_0000252905" description="Fluoride-specific ion channel FluC">
    <location>
        <begin position="1"/>
        <end position="128"/>
    </location>
</feature>
<feature type="transmembrane region" description="Helical" evidence="1">
    <location>
        <begin position="3"/>
        <end position="23"/>
    </location>
</feature>
<feature type="transmembrane region" description="Helical" evidence="1">
    <location>
        <begin position="33"/>
        <end position="53"/>
    </location>
</feature>
<feature type="transmembrane region" description="Helical" evidence="1">
    <location>
        <begin position="69"/>
        <end position="89"/>
    </location>
</feature>
<feature type="transmembrane region" description="Helical" evidence="1">
    <location>
        <begin position="99"/>
        <end position="119"/>
    </location>
</feature>
<feature type="binding site" evidence="1">
    <location>
        <position position="76"/>
    </location>
    <ligand>
        <name>Na(+)</name>
        <dbReference type="ChEBI" id="CHEBI:29101"/>
        <note>structural</note>
    </ligand>
</feature>
<feature type="binding site" evidence="1">
    <location>
        <position position="79"/>
    </location>
    <ligand>
        <name>Na(+)</name>
        <dbReference type="ChEBI" id="CHEBI:29101"/>
        <note>structural</note>
    </ligand>
</feature>
<gene>
    <name evidence="1" type="primary">fluC</name>
    <name evidence="1" type="synonym">crcB</name>
    <name type="ordered locus">Nmul_A1562</name>
</gene>
<reference key="1">
    <citation type="submission" date="2005-08" db="EMBL/GenBank/DDBJ databases">
        <title>Complete sequence of chromosome 1 of Nitrosospira multiformis ATCC 25196.</title>
        <authorList>
            <person name="Copeland A."/>
            <person name="Lucas S."/>
            <person name="Lapidus A."/>
            <person name="Barry K."/>
            <person name="Detter J.C."/>
            <person name="Glavina T."/>
            <person name="Hammon N."/>
            <person name="Israni S."/>
            <person name="Pitluck S."/>
            <person name="Chain P."/>
            <person name="Malfatti S."/>
            <person name="Shin M."/>
            <person name="Vergez L."/>
            <person name="Schmutz J."/>
            <person name="Larimer F."/>
            <person name="Land M."/>
            <person name="Hauser L."/>
            <person name="Kyrpides N."/>
            <person name="Lykidis A."/>
            <person name="Richardson P."/>
        </authorList>
    </citation>
    <scope>NUCLEOTIDE SEQUENCE [LARGE SCALE GENOMIC DNA]</scope>
    <source>
        <strain>ATCC 25196 / NCIMB 11849 / C 71</strain>
    </source>
</reference>
<keyword id="KW-0997">Cell inner membrane</keyword>
<keyword id="KW-1003">Cell membrane</keyword>
<keyword id="KW-0407">Ion channel</keyword>
<keyword id="KW-0406">Ion transport</keyword>
<keyword id="KW-0472">Membrane</keyword>
<keyword id="KW-0479">Metal-binding</keyword>
<keyword id="KW-1185">Reference proteome</keyword>
<keyword id="KW-0915">Sodium</keyword>
<keyword id="KW-0812">Transmembrane</keyword>
<keyword id="KW-1133">Transmembrane helix</keyword>
<keyword id="KW-0813">Transport</keyword>
<evidence type="ECO:0000255" key="1">
    <source>
        <dbReference type="HAMAP-Rule" id="MF_00454"/>
    </source>
</evidence>
<organism>
    <name type="scientific">Nitrosospira multiformis (strain ATCC 25196 / NCIMB 11849 / C 71)</name>
    <dbReference type="NCBI Taxonomy" id="323848"/>
    <lineage>
        <taxon>Bacteria</taxon>
        <taxon>Pseudomonadati</taxon>
        <taxon>Pseudomonadota</taxon>
        <taxon>Betaproteobacteria</taxon>
        <taxon>Nitrosomonadales</taxon>
        <taxon>Nitrosomonadaceae</taxon>
        <taxon>Nitrosospira</taxon>
    </lineage>
</organism>
<sequence length="128" mass="13880">MGLYALTAIGAGAALGAWLRWWFGMTLNPLFPTLPLGTLAANLTGGYLIGAAIEYFHHNSFLPPEARLFAITGFLGGLTTFSTFSAETVTLLLRGQYAWTFVIIFSHLTGSLVMTILGIMTVKWLAQH</sequence>
<name>FLUC_NITMU</name>
<accession>Q2Y8Q6</accession>
<proteinExistence type="inferred from homology"/>
<dbReference type="EMBL" id="CP000103">
    <property type="protein sequence ID" value="ABB74865.1"/>
    <property type="molecule type" value="Genomic_DNA"/>
</dbReference>
<dbReference type="RefSeq" id="WP_011380894.1">
    <property type="nucleotide sequence ID" value="NC_007614.1"/>
</dbReference>
<dbReference type="SMR" id="Q2Y8Q6"/>
<dbReference type="STRING" id="323848.Nmul_A1562"/>
<dbReference type="KEGG" id="nmu:Nmul_A1562"/>
<dbReference type="eggNOG" id="COG0239">
    <property type="taxonomic scope" value="Bacteria"/>
</dbReference>
<dbReference type="HOGENOM" id="CLU_114342_3_3_4"/>
<dbReference type="OrthoDB" id="9806299at2"/>
<dbReference type="Proteomes" id="UP000002718">
    <property type="component" value="Chromosome"/>
</dbReference>
<dbReference type="GO" id="GO:0005886">
    <property type="term" value="C:plasma membrane"/>
    <property type="evidence" value="ECO:0007669"/>
    <property type="project" value="UniProtKB-SubCell"/>
</dbReference>
<dbReference type="GO" id="GO:0062054">
    <property type="term" value="F:fluoride channel activity"/>
    <property type="evidence" value="ECO:0007669"/>
    <property type="project" value="UniProtKB-UniRule"/>
</dbReference>
<dbReference type="GO" id="GO:0046872">
    <property type="term" value="F:metal ion binding"/>
    <property type="evidence" value="ECO:0007669"/>
    <property type="project" value="UniProtKB-KW"/>
</dbReference>
<dbReference type="GO" id="GO:0140114">
    <property type="term" value="P:cellular detoxification of fluoride"/>
    <property type="evidence" value="ECO:0007669"/>
    <property type="project" value="UniProtKB-UniRule"/>
</dbReference>
<dbReference type="HAMAP" id="MF_00454">
    <property type="entry name" value="FluC"/>
    <property type="match status" value="1"/>
</dbReference>
<dbReference type="InterPro" id="IPR003691">
    <property type="entry name" value="FluC"/>
</dbReference>
<dbReference type="NCBIfam" id="TIGR00494">
    <property type="entry name" value="crcB"/>
    <property type="match status" value="1"/>
</dbReference>
<dbReference type="NCBIfam" id="NF010792">
    <property type="entry name" value="PRK14196.1"/>
    <property type="match status" value="1"/>
</dbReference>
<dbReference type="PANTHER" id="PTHR28259">
    <property type="entry name" value="FLUORIDE EXPORT PROTEIN 1-RELATED"/>
    <property type="match status" value="1"/>
</dbReference>
<dbReference type="PANTHER" id="PTHR28259:SF1">
    <property type="entry name" value="FLUORIDE EXPORT PROTEIN 1-RELATED"/>
    <property type="match status" value="1"/>
</dbReference>
<dbReference type="Pfam" id="PF02537">
    <property type="entry name" value="CRCB"/>
    <property type="match status" value="1"/>
</dbReference>